<sequence>MFNTHKVEIEWGGRPLTLETGKIARQADGAVLATYGETAVLATVVSAKEPKPGQDFFPLTVNYQEKTYAAGKIPGGYFKREGRPSENETLVSRLIDRPIRPLFVDGYKNDTQVVITVLQHDLENNPDILSMVAASAALTISGVPFMGPISGARVGYIDGEYVLNPNIDEMPESKLDLVVAGTSEAVLMVESEAQELPEDVMLGAVMFGHKSFQPVIDAIIKLAEVAAKEPRDFQPEDLSELEAKVLAVVENDLREAYKITEKQARYAAVDAAKAKAKEHFFPEGVEETEMSAEQFATIFKHLQAKIVRWNILDTGNRIDGRDLSTVRPIVSEVGILPRTHGSALFTRGETQAIVVATLGTGEDEQMIDALTGTYKESFMLHYNFPPYSVGETGRMGSPGRREIGHGKLAWRAIHPMLPAAEQFPYTIRAVSEITESNGSSSMATVCGTSLALMDAGVPIVRPVAGIAMGLIKEGERFAVLSDILGDEDHLGDMDFKVAGTEFGITSLQMDIKIDGITEEIMKVALEQAKGGRVHILGEMAKAISSSRAELGEFAPRIEVMNIPTDKIRDVIGSGGKVIREIVEKTGAKINIEDDGTVKIASSNGKEIEAAKKWIHSIVAEPEVGEIYEGTVVKTADFGAFVNFFGPRDGLVHISQLAADRVAKTTDVVKEGQKVWVKLMGFDERGKVRLSMKVVDQETGKEIVAEKKKEEVDAE</sequence>
<feature type="chain" id="PRO_1000147893" description="Polyribonucleotide nucleotidyltransferase">
    <location>
        <begin position="1"/>
        <end position="714"/>
    </location>
</feature>
<feature type="domain" description="KH" evidence="1">
    <location>
        <begin position="555"/>
        <end position="614"/>
    </location>
</feature>
<feature type="domain" description="S1 motif" evidence="1">
    <location>
        <begin position="624"/>
        <end position="692"/>
    </location>
</feature>
<feature type="binding site" evidence="1">
    <location>
        <position position="488"/>
    </location>
    <ligand>
        <name>Mg(2+)</name>
        <dbReference type="ChEBI" id="CHEBI:18420"/>
    </ligand>
</feature>
<feature type="binding site" evidence="1">
    <location>
        <position position="494"/>
    </location>
    <ligand>
        <name>Mg(2+)</name>
        <dbReference type="ChEBI" id="CHEBI:18420"/>
    </ligand>
</feature>
<name>PNP_BRUA1</name>
<evidence type="ECO:0000255" key="1">
    <source>
        <dbReference type="HAMAP-Rule" id="MF_01595"/>
    </source>
</evidence>
<gene>
    <name evidence="1" type="primary">pnp</name>
    <name type="ordered locus">BAbS19_I20300</name>
</gene>
<dbReference type="EC" id="2.7.7.8" evidence="1"/>
<dbReference type="EMBL" id="CP000887">
    <property type="protein sequence ID" value="ACD73512.1"/>
    <property type="molecule type" value="Genomic_DNA"/>
</dbReference>
<dbReference type="RefSeq" id="WP_002965231.1">
    <property type="nucleotide sequence ID" value="NC_010742.1"/>
</dbReference>
<dbReference type="SMR" id="B2S9G0"/>
<dbReference type="GeneID" id="97534578"/>
<dbReference type="KEGG" id="bmc:BAbS19_I20300"/>
<dbReference type="HOGENOM" id="CLU_004217_2_2_5"/>
<dbReference type="Proteomes" id="UP000002565">
    <property type="component" value="Chromosome 1"/>
</dbReference>
<dbReference type="GO" id="GO:0005829">
    <property type="term" value="C:cytosol"/>
    <property type="evidence" value="ECO:0007669"/>
    <property type="project" value="TreeGrafter"/>
</dbReference>
<dbReference type="GO" id="GO:0000175">
    <property type="term" value="F:3'-5'-RNA exonuclease activity"/>
    <property type="evidence" value="ECO:0007669"/>
    <property type="project" value="TreeGrafter"/>
</dbReference>
<dbReference type="GO" id="GO:0000287">
    <property type="term" value="F:magnesium ion binding"/>
    <property type="evidence" value="ECO:0007669"/>
    <property type="project" value="UniProtKB-UniRule"/>
</dbReference>
<dbReference type="GO" id="GO:0004654">
    <property type="term" value="F:polyribonucleotide nucleotidyltransferase activity"/>
    <property type="evidence" value="ECO:0007669"/>
    <property type="project" value="UniProtKB-UniRule"/>
</dbReference>
<dbReference type="GO" id="GO:0003723">
    <property type="term" value="F:RNA binding"/>
    <property type="evidence" value="ECO:0007669"/>
    <property type="project" value="UniProtKB-UniRule"/>
</dbReference>
<dbReference type="GO" id="GO:0006402">
    <property type="term" value="P:mRNA catabolic process"/>
    <property type="evidence" value="ECO:0007669"/>
    <property type="project" value="UniProtKB-UniRule"/>
</dbReference>
<dbReference type="GO" id="GO:0006396">
    <property type="term" value="P:RNA processing"/>
    <property type="evidence" value="ECO:0007669"/>
    <property type="project" value="InterPro"/>
</dbReference>
<dbReference type="CDD" id="cd02393">
    <property type="entry name" value="KH-I_PNPase"/>
    <property type="match status" value="1"/>
</dbReference>
<dbReference type="CDD" id="cd11363">
    <property type="entry name" value="RNase_PH_PNPase_1"/>
    <property type="match status" value="1"/>
</dbReference>
<dbReference type="CDD" id="cd11364">
    <property type="entry name" value="RNase_PH_PNPase_2"/>
    <property type="match status" value="1"/>
</dbReference>
<dbReference type="CDD" id="cd04472">
    <property type="entry name" value="S1_PNPase"/>
    <property type="match status" value="1"/>
</dbReference>
<dbReference type="FunFam" id="2.40.50.140:FF:000107">
    <property type="entry name" value="Polyribonucleotide nucleotidyltransferase"/>
    <property type="match status" value="1"/>
</dbReference>
<dbReference type="FunFam" id="3.30.1370.10:FF:000001">
    <property type="entry name" value="Polyribonucleotide nucleotidyltransferase"/>
    <property type="match status" value="1"/>
</dbReference>
<dbReference type="FunFam" id="3.30.230.70:FF:000001">
    <property type="entry name" value="Polyribonucleotide nucleotidyltransferase"/>
    <property type="match status" value="1"/>
</dbReference>
<dbReference type="FunFam" id="3.30.230.70:FF:000002">
    <property type="entry name" value="Polyribonucleotide nucleotidyltransferase"/>
    <property type="match status" value="1"/>
</dbReference>
<dbReference type="Gene3D" id="3.30.230.70">
    <property type="entry name" value="GHMP Kinase, N-terminal domain"/>
    <property type="match status" value="2"/>
</dbReference>
<dbReference type="Gene3D" id="3.30.1370.10">
    <property type="entry name" value="K Homology domain, type 1"/>
    <property type="match status" value="1"/>
</dbReference>
<dbReference type="Gene3D" id="2.40.50.140">
    <property type="entry name" value="Nucleic acid-binding proteins"/>
    <property type="match status" value="1"/>
</dbReference>
<dbReference type="HAMAP" id="MF_01595">
    <property type="entry name" value="PNPase"/>
    <property type="match status" value="1"/>
</dbReference>
<dbReference type="InterPro" id="IPR001247">
    <property type="entry name" value="ExoRNase_PH_dom1"/>
</dbReference>
<dbReference type="InterPro" id="IPR015847">
    <property type="entry name" value="ExoRNase_PH_dom2"/>
</dbReference>
<dbReference type="InterPro" id="IPR036345">
    <property type="entry name" value="ExoRNase_PH_dom2_sf"/>
</dbReference>
<dbReference type="InterPro" id="IPR004087">
    <property type="entry name" value="KH_dom"/>
</dbReference>
<dbReference type="InterPro" id="IPR004088">
    <property type="entry name" value="KH_dom_type_1"/>
</dbReference>
<dbReference type="InterPro" id="IPR036612">
    <property type="entry name" value="KH_dom_type_1_sf"/>
</dbReference>
<dbReference type="InterPro" id="IPR012340">
    <property type="entry name" value="NA-bd_OB-fold"/>
</dbReference>
<dbReference type="InterPro" id="IPR012162">
    <property type="entry name" value="PNPase"/>
</dbReference>
<dbReference type="InterPro" id="IPR027408">
    <property type="entry name" value="PNPase/RNase_PH_dom_sf"/>
</dbReference>
<dbReference type="InterPro" id="IPR015848">
    <property type="entry name" value="PNPase_PH_RNA-bd_bac/org-type"/>
</dbReference>
<dbReference type="InterPro" id="IPR020568">
    <property type="entry name" value="Ribosomal_Su5_D2-typ_SF"/>
</dbReference>
<dbReference type="InterPro" id="IPR003029">
    <property type="entry name" value="S1_domain"/>
</dbReference>
<dbReference type="NCBIfam" id="TIGR03591">
    <property type="entry name" value="polynuc_phos"/>
    <property type="match status" value="1"/>
</dbReference>
<dbReference type="NCBIfam" id="NF008805">
    <property type="entry name" value="PRK11824.1"/>
    <property type="match status" value="1"/>
</dbReference>
<dbReference type="PANTHER" id="PTHR11252">
    <property type="entry name" value="POLYRIBONUCLEOTIDE NUCLEOTIDYLTRANSFERASE"/>
    <property type="match status" value="1"/>
</dbReference>
<dbReference type="PANTHER" id="PTHR11252:SF0">
    <property type="entry name" value="POLYRIBONUCLEOTIDE NUCLEOTIDYLTRANSFERASE 1, MITOCHONDRIAL"/>
    <property type="match status" value="1"/>
</dbReference>
<dbReference type="Pfam" id="PF00013">
    <property type="entry name" value="KH_1"/>
    <property type="match status" value="1"/>
</dbReference>
<dbReference type="Pfam" id="PF03726">
    <property type="entry name" value="PNPase"/>
    <property type="match status" value="1"/>
</dbReference>
<dbReference type="Pfam" id="PF01138">
    <property type="entry name" value="RNase_PH"/>
    <property type="match status" value="2"/>
</dbReference>
<dbReference type="Pfam" id="PF03725">
    <property type="entry name" value="RNase_PH_C"/>
    <property type="match status" value="2"/>
</dbReference>
<dbReference type="Pfam" id="PF00575">
    <property type="entry name" value="S1"/>
    <property type="match status" value="1"/>
</dbReference>
<dbReference type="PIRSF" id="PIRSF005499">
    <property type="entry name" value="PNPase"/>
    <property type="match status" value="1"/>
</dbReference>
<dbReference type="SMART" id="SM00322">
    <property type="entry name" value="KH"/>
    <property type="match status" value="1"/>
</dbReference>
<dbReference type="SMART" id="SM00316">
    <property type="entry name" value="S1"/>
    <property type="match status" value="1"/>
</dbReference>
<dbReference type="SUPFAM" id="SSF54791">
    <property type="entry name" value="Eukaryotic type KH-domain (KH-domain type I)"/>
    <property type="match status" value="1"/>
</dbReference>
<dbReference type="SUPFAM" id="SSF50249">
    <property type="entry name" value="Nucleic acid-binding proteins"/>
    <property type="match status" value="1"/>
</dbReference>
<dbReference type="SUPFAM" id="SSF55666">
    <property type="entry name" value="Ribonuclease PH domain 2-like"/>
    <property type="match status" value="2"/>
</dbReference>
<dbReference type="SUPFAM" id="SSF54211">
    <property type="entry name" value="Ribosomal protein S5 domain 2-like"/>
    <property type="match status" value="2"/>
</dbReference>
<dbReference type="PROSITE" id="PS50084">
    <property type="entry name" value="KH_TYPE_1"/>
    <property type="match status" value="1"/>
</dbReference>
<dbReference type="PROSITE" id="PS50126">
    <property type="entry name" value="S1"/>
    <property type="match status" value="1"/>
</dbReference>
<accession>B2S9G0</accession>
<keyword id="KW-0963">Cytoplasm</keyword>
<keyword id="KW-0460">Magnesium</keyword>
<keyword id="KW-0479">Metal-binding</keyword>
<keyword id="KW-0548">Nucleotidyltransferase</keyword>
<keyword id="KW-0694">RNA-binding</keyword>
<keyword id="KW-0808">Transferase</keyword>
<comment type="function">
    <text evidence="1">Involved in mRNA degradation. Catalyzes the phosphorolysis of single-stranded polyribonucleotides processively in the 3'- to 5'-direction.</text>
</comment>
<comment type="catalytic activity">
    <reaction evidence="1">
        <text>RNA(n+1) + phosphate = RNA(n) + a ribonucleoside 5'-diphosphate</text>
        <dbReference type="Rhea" id="RHEA:22096"/>
        <dbReference type="Rhea" id="RHEA-COMP:14527"/>
        <dbReference type="Rhea" id="RHEA-COMP:17342"/>
        <dbReference type="ChEBI" id="CHEBI:43474"/>
        <dbReference type="ChEBI" id="CHEBI:57930"/>
        <dbReference type="ChEBI" id="CHEBI:140395"/>
        <dbReference type="EC" id="2.7.7.8"/>
    </reaction>
</comment>
<comment type="cofactor">
    <cofactor evidence="1">
        <name>Mg(2+)</name>
        <dbReference type="ChEBI" id="CHEBI:18420"/>
    </cofactor>
</comment>
<comment type="subcellular location">
    <subcellularLocation>
        <location evidence="1">Cytoplasm</location>
    </subcellularLocation>
</comment>
<comment type="similarity">
    <text evidence="1">Belongs to the polyribonucleotide nucleotidyltransferase family.</text>
</comment>
<protein>
    <recommendedName>
        <fullName evidence="1">Polyribonucleotide nucleotidyltransferase</fullName>
        <ecNumber evidence="1">2.7.7.8</ecNumber>
    </recommendedName>
    <alternativeName>
        <fullName evidence="1">Polynucleotide phosphorylase</fullName>
        <shortName evidence="1">PNPase</shortName>
    </alternativeName>
</protein>
<proteinExistence type="inferred from homology"/>
<organism>
    <name type="scientific">Brucella abortus (strain S19)</name>
    <dbReference type="NCBI Taxonomy" id="430066"/>
    <lineage>
        <taxon>Bacteria</taxon>
        <taxon>Pseudomonadati</taxon>
        <taxon>Pseudomonadota</taxon>
        <taxon>Alphaproteobacteria</taxon>
        <taxon>Hyphomicrobiales</taxon>
        <taxon>Brucellaceae</taxon>
        <taxon>Brucella/Ochrobactrum group</taxon>
        <taxon>Brucella</taxon>
    </lineage>
</organism>
<reference key="1">
    <citation type="journal article" date="2008" name="PLoS ONE">
        <title>Genome sequence of Brucella abortus vaccine strain S19 compared to virulent strains yields candidate virulence genes.</title>
        <authorList>
            <person name="Crasta O.R."/>
            <person name="Folkerts O."/>
            <person name="Fei Z."/>
            <person name="Mane S.P."/>
            <person name="Evans C."/>
            <person name="Martino-Catt S."/>
            <person name="Bricker B."/>
            <person name="Yu G."/>
            <person name="Du L."/>
            <person name="Sobral B.W."/>
        </authorList>
    </citation>
    <scope>NUCLEOTIDE SEQUENCE [LARGE SCALE GENOMIC DNA]</scope>
    <source>
        <strain>S19</strain>
    </source>
</reference>